<feature type="chain" id="PRO_0000433301" description="GLH-binding kinase 1">
    <location>
        <begin position="1"/>
        <end position="390"/>
    </location>
</feature>
<feature type="domain" description="Protein kinase" evidence="2">
    <location>
        <begin position="38"/>
        <end position="338"/>
    </location>
</feature>
<feature type="active site" description="Proton acceptor" evidence="2">
    <location>
        <position position="164"/>
    </location>
</feature>
<feature type="binding site" evidence="2">
    <location>
        <begin position="44"/>
        <end position="52"/>
    </location>
    <ligand>
        <name>ATP</name>
        <dbReference type="ChEBI" id="CHEBI:30616"/>
    </ligand>
</feature>
<feature type="binding site" evidence="2">
    <location>
        <position position="67"/>
    </location>
    <ligand>
        <name>ATP</name>
        <dbReference type="ChEBI" id="CHEBI:30616"/>
    </ligand>
</feature>
<feature type="modified residue" description="Phosphoserine" evidence="7 10">
    <location>
        <position position="198"/>
    </location>
</feature>
<feature type="modified residue" description="Phosphotyrosine" evidence="7 10">
    <location>
        <position position="200"/>
    </location>
</feature>
<feature type="mutagenesis site" description="Loss of activity." evidence="4">
    <original>K</original>
    <variation>N</variation>
    <location>
        <position position="67"/>
    </location>
</feature>
<feature type="mutagenesis site" description="Loss of activity." evidence="4">
    <original>S</original>
    <variation>A</variation>
    <location>
        <position position="198"/>
    </location>
</feature>
<feature type="mutagenesis site" description="Loss of activity." evidence="4">
    <original>Y</original>
    <variation>F</variation>
    <location>
        <position position="200"/>
    </location>
</feature>
<evidence type="ECO:0000250" key="1">
    <source>
        <dbReference type="UniProtKB" id="Q8WQG9"/>
    </source>
</evidence>
<evidence type="ECO:0000255" key="2">
    <source>
        <dbReference type="PROSITE-ProRule" id="PRU00159"/>
    </source>
</evidence>
<evidence type="ECO:0000269" key="3">
    <source>
    </source>
</evidence>
<evidence type="ECO:0000269" key="4">
    <source>
    </source>
</evidence>
<evidence type="ECO:0000269" key="5">
    <source>
    </source>
</evidence>
<evidence type="ECO:0000269" key="6">
    <source>
    </source>
</evidence>
<evidence type="ECO:0000269" key="7">
    <source>
    </source>
</evidence>
<evidence type="ECO:0000269" key="8">
    <source>
    </source>
</evidence>
<evidence type="ECO:0000269" key="9">
    <source>
    </source>
</evidence>
<evidence type="ECO:0000269" key="10">
    <source>
    </source>
</evidence>
<evidence type="ECO:0000269" key="11">
    <source>
    </source>
</evidence>
<evidence type="ECO:0000269" key="12">
    <source>
    </source>
</evidence>
<evidence type="ECO:0000269" key="13">
    <source>
    </source>
</evidence>
<evidence type="ECO:0000303" key="14">
    <source>
    </source>
</evidence>
<evidence type="ECO:0000305" key="15"/>
<evidence type="ECO:0000305" key="16">
    <source>
    </source>
</evidence>
<evidence type="ECO:0000312" key="17">
    <source>
        <dbReference type="Proteomes" id="UP000001940"/>
    </source>
</evidence>
<evidence type="ECO:0000312" key="18">
    <source>
        <dbReference type="WormBase" id="T07A9.3"/>
    </source>
</evidence>
<protein>
    <recommendedName>
        <fullName evidence="14">GLH-binding kinase 1</fullName>
        <ecNumber evidence="4">2.7.11.24</ecNumber>
    </recommendedName>
</protein>
<reference evidence="17" key="1">
    <citation type="journal article" date="1998" name="Science">
        <title>Genome sequence of the nematode C. elegans: a platform for investigating biology.</title>
        <authorList>
            <consortium name="The C. elegans sequencing consortium"/>
        </authorList>
    </citation>
    <scope>NUCLEOTIDE SEQUENCE [LARGE SCALE GENOMIC DNA]</scope>
    <source>
        <strain evidence="17">Bristol N2</strain>
    </source>
</reference>
<reference evidence="15" key="2">
    <citation type="journal article" date="2002" name="Dev. Biol.">
        <title>The GLH proteins, Caenorhabditis elegans P granule components, associate with CSN-5 and KGB-1, proteins necessary for fertility, and with ZYX-1, a predicted cytoskeletal protein.</title>
        <authorList>
            <person name="Smith P."/>
            <person name="Leung-Chiu W.-M."/>
            <person name="Montgomery R."/>
            <person name="Orsborn A."/>
            <person name="Kuznicki K."/>
            <person name="Gressman-Coberly E."/>
            <person name="Mutapcic L."/>
            <person name="Bennett K."/>
        </authorList>
    </citation>
    <scope>FUNCTION</scope>
    <scope>TISSUE SPECIFICITY</scope>
    <scope>DISRUPTION PHENOTYPE</scope>
    <scope>INTERACTION WITH GLH-1; GLH-2; GLH-3 AND GLH-4</scope>
</reference>
<reference evidence="15" key="3">
    <citation type="journal article" date="2004" name="EMBO J.">
        <title>The Caenorhabditis elegans MAPK phosphatase VHP-1 mediates a novel JNK-like signaling pathway in stress response.</title>
        <authorList>
            <person name="Mizuno T."/>
            <person name="Hisamoto N."/>
            <person name="Terada T."/>
            <person name="Kondo T."/>
            <person name="Adachi M."/>
            <person name="Nishida E."/>
            <person name="Kim D.H."/>
            <person name="Ausubel F.M."/>
            <person name="Matsumoto K."/>
        </authorList>
    </citation>
    <scope>FUNCTION</scope>
    <scope>CATALYTIC ACTIVITY</scope>
    <scope>ACTIVITY REGULATION</scope>
    <scope>DISRUPTION PHENOTYPE</scope>
    <scope>MUTAGENESIS OF LYS-67; SER-198 AND TYR-200</scope>
</reference>
<reference evidence="15" key="4">
    <citation type="journal article" date="2004" name="Proc. Natl. Acad. Sci. U.S.A.">
        <title>Mitogen-activated protein kinase pathways defend against bacterial pore-forming toxins.</title>
        <authorList>
            <person name="Huffman D.L."/>
            <person name="Abrami L."/>
            <person name="Sasik R."/>
            <person name="Corbeil J."/>
            <person name="van der Goot F.G."/>
            <person name="Aroian R.V."/>
        </authorList>
    </citation>
    <scope>FUNCTION</scope>
    <scope>DISRUPTION PHENOTYPE</scope>
    <scope>INDUCTION BY CRY5B</scope>
</reference>
<reference evidence="15" key="5">
    <citation type="journal article" date="2007" name="Development">
        <title>GLH-1, the C. elegans P granule protein, is controlled by the JNK KGB-1 and by the COP9 subunit CSN-5.</title>
        <authorList>
            <person name="Orsborn A.M."/>
            <person name="Li W."/>
            <person name="McEwen T.J."/>
            <person name="Mizuno T."/>
            <person name="Kuzmin E."/>
            <person name="Matsumoto K."/>
            <person name="Bennett K.L."/>
        </authorList>
    </citation>
    <scope>FUNCTION</scope>
    <scope>SUBCELLULAR LOCATION</scope>
    <scope>DISRUPTION PHENOTYPE</scope>
    <scope>INTERACTION WITH CSN-5 AND GLH-1</scope>
</reference>
<reference evidence="15" key="6">
    <citation type="journal article" date="2008" name="Mol. Cell. Biol.">
        <title>Role of the Caenorhabditis elegans Shc adaptor protein in the c-Jun N-terminal kinase signaling pathway.</title>
        <authorList>
            <person name="Mizuno T."/>
            <person name="Fujiki K."/>
            <person name="Sasakawa A."/>
            <person name="Hisamoto N."/>
            <person name="Matsumoto K."/>
        </authorList>
    </citation>
    <scope>PHOSPHORYLATION AT SER-198 AND TYR-200</scope>
</reference>
<reference evidence="15" key="7">
    <citation type="journal article" date="2011" name="PLoS Pathog.">
        <title>Global functional analyses of cellular responses to pore-forming toxins.</title>
        <authorList>
            <person name="Kao C.Y."/>
            <person name="Los F.C."/>
            <person name="Huffman D.L."/>
            <person name="Wachi S."/>
            <person name="Kloft N."/>
            <person name="Husmann M."/>
            <person name="Karabrahimi V."/>
            <person name="Schwartz J.L."/>
            <person name="Bellier A."/>
            <person name="Ha C."/>
            <person name="Sagong Y."/>
            <person name="Fan H."/>
            <person name="Ghosh P."/>
            <person name="Hsieh M."/>
            <person name="Hsu C.S."/>
            <person name="Chen L."/>
            <person name="Aroian R.V."/>
        </authorList>
    </citation>
    <scope>FUNCTION</scope>
    <scope>DISRUPTION PHENOTYPE</scope>
</reference>
<reference evidence="15" key="8">
    <citation type="journal article" date="2011" name="Proc. Natl. Acad. Sci. U.S.A.">
        <title>Axon regeneration requires coordinate activation of p38 and JNK MAPK pathways.</title>
        <authorList>
            <person name="Nix P."/>
            <person name="Hisamoto N."/>
            <person name="Matsumoto K."/>
            <person name="Bastiani M."/>
        </authorList>
    </citation>
    <scope>FUNCTION</scope>
    <scope>DISRUPTION PHENOTYPE</scope>
</reference>
<reference evidence="15" key="9">
    <citation type="journal article" date="2012" name="Aging Cell">
        <title>An age-dependent reversal in the protective capacities of JNK signaling shortens Caenorhabditis elegans lifespan.</title>
        <authorList>
            <person name="Twumasi-Boateng K."/>
            <person name="Wang T.W."/>
            <person name="Tsai L."/>
            <person name="Lee K.H."/>
            <person name="Salehpour A."/>
            <person name="Bhat S."/>
            <person name="Tan M.W."/>
            <person name="Shapira M."/>
        </authorList>
    </citation>
    <scope>FUNCTION</scope>
    <scope>ACTIVITY REGULATION</scope>
    <scope>DISRUPTION PHENOTYPE</scope>
</reference>
<reference key="10">
    <citation type="journal article" date="2012" name="Nat. Neurosci.">
        <title>The growth factor SVH-1 regulates axon regeneration in C. elegans via the JNK MAPK cascade.</title>
        <authorList>
            <person name="Li C."/>
            <person name="Hisamoto N."/>
            <person name="Nix P."/>
            <person name="Kanao S."/>
            <person name="Mizuno T."/>
            <person name="Bastiani M."/>
            <person name="Matsumoto K."/>
        </authorList>
    </citation>
    <scope>FUNCTION</scope>
    <scope>PHOSPHORYLATION</scope>
</reference>
<reference key="11">
    <citation type="journal article" date="2013" name="Cell Rep.">
        <title>A fasting-responsive signaling pathway that extends life span in C. elegans.</title>
        <authorList>
            <person name="Uno M."/>
            <person name="Honjoh S."/>
            <person name="Matsuda M."/>
            <person name="Hoshikawa H."/>
            <person name="Kishimoto S."/>
            <person name="Yamamoto T."/>
            <person name="Ebisuya M."/>
            <person name="Yamamoto T."/>
            <person name="Matsumoto K."/>
            <person name="Nishida E."/>
        </authorList>
    </citation>
    <scope>FUNCTION</scope>
    <scope>ACTIVITY REGULATION</scope>
    <scope>DISRUPTION PHENOTYPE</scope>
</reference>
<reference key="12">
    <citation type="journal article" date="2013" name="PLoS Genet.">
        <title>The Caenorhabditis elegans JNK signaling pathway activates expression of stress response genes by derepressing the Fos/HDAC repressor complex.</title>
        <authorList>
            <person name="Hattori A."/>
            <person name="Mizuno T."/>
            <person name="Akamatsu M."/>
            <person name="Hisamoto N."/>
            <person name="Matsumoto K."/>
        </authorList>
    </citation>
    <scope>FUNCTION</scope>
    <scope>DISRUPTION PHENOTYPE</scope>
    <scope>INTERACTION WITH FOS-1</scope>
</reference>
<name>KGB1_CAEEL</name>
<keyword id="KW-0067">ATP-binding</keyword>
<keyword id="KW-0963">Cytoplasm</keyword>
<keyword id="KW-0221">Differentiation</keyword>
<keyword id="KW-0418">Kinase</keyword>
<keyword id="KW-0547">Nucleotide-binding</keyword>
<keyword id="KW-0896">Oogenesis</keyword>
<keyword id="KW-0597">Phosphoprotein</keyword>
<keyword id="KW-1185">Reference proteome</keyword>
<keyword id="KW-0723">Serine/threonine-protein kinase</keyword>
<keyword id="KW-0744">Spermatogenesis</keyword>
<keyword id="KW-0346">Stress response</keyword>
<keyword id="KW-0808">Transferase</keyword>
<gene>
    <name evidence="18" type="primary">kgb-1</name>
    <name evidence="18" type="ORF">T07A9.3</name>
</gene>
<dbReference type="EC" id="2.7.11.24" evidence="4"/>
<dbReference type="EMBL" id="FO081716">
    <property type="protein sequence ID" value="CCD73974.1"/>
    <property type="molecule type" value="Genomic_DNA"/>
</dbReference>
<dbReference type="RefSeq" id="NP_499922.1">
    <property type="nucleotide sequence ID" value="NM_067521.8"/>
</dbReference>
<dbReference type="SMR" id="O44408"/>
<dbReference type="DIP" id="DIP-24645N"/>
<dbReference type="FunCoup" id="O44408">
    <property type="interactions" value="485"/>
</dbReference>
<dbReference type="IntAct" id="O44408">
    <property type="interactions" value="6"/>
</dbReference>
<dbReference type="STRING" id="6239.T07A9.3.1"/>
<dbReference type="iPTMnet" id="O44408"/>
<dbReference type="PaxDb" id="6239-T07A9.3"/>
<dbReference type="PeptideAtlas" id="O44408"/>
<dbReference type="EnsemblMetazoa" id="T07A9.3.1">
    <property type="protein sequence ID" value="T07A9.3.1"/>
    <property type="gene ID" value="WBGene00002187"/>
</dbReference>
<dbReference type="EnsemblMetazoa" id="T07A9.3.2">
    <property type="protein sequence ID" value="T07A9.3.2"/>
    <property type="gene ID" value="WBGene00002187"/>
</dbReference>
<dbReference type="EnsemblMetazoa" id="T07A9.3.3">
    <property type="protein sequence ID" value="T07A9.3.3"/>
    <property type="gene ID" value="WBGene00002187"/>
</dbReference>
<dbReference type="GeneID" id="176866"/>
<dbReference type="KEGG" id="cel:CELE_T07A9.3"/>
<dbReference type="UCSC" id="T07A9.3">
    <property type="organism name" value="c. elegans"/>
</dbReference>
<dbReference type="AGR" id="WB:WBGene00002187"/>
<dbReference type="CTD" id="176866"/>
<dbReference type="WormBase" id="T07A9.3">
    <property type="protein sequence ID" value="CE29466"/>
    <property type="gene ID" value="WBGene00002187"/>
    <property type="gene designation" value="kgb-1"/>
</dbReference>
<dbReference type="eggNOG" id="KOG0665">
    <property type="taxonomic scope" value="Eukaryota"/>
</dbReference>
<dbReference type="GeneTree" id="ENSGT00970000196719"/>
<dbReference type="HOGENOM" id="CLU_000288_181_1_1"/>
<dbReference type="InParanoid" id="O44408"/>
<dbReference type="OMA" id="VVNDKCV"/>
<dbReference type="OrthoDB" id="192887at2759"/>
<dbReference type="PhylomeDB" id="O44408"/>
<dbReference type="BRENDA" id="2.7.11.24">
    <property type="organism ID" value="1045"/>
</dbReference>
<dbReference type="Reactome" id="R-CEL-2559580">
    <property type="pathway name" value="Oxidative Stress Induced Senescence"/>
</dbReference>
<dbReference type="Reactome" id="R-CEL-2871796">
    <property type="pathway name" value="FCERI mediated MAPK activation"/>
</dbReference>
<dbReference type="Reactome" id="R-CEL-450321">
    <property type="pathway name" value="JNK (c-Jun kinases) phosphorylation and activation mediated by activated human TAK1"/>
</dbReference>
<dbReference type="Reactome" id="R-CEL-450341">
    <property type="pathway name" value="Activation of the AP-1 family of transcription factors"/>
</dbReference>
<dbReference type="SignaLink" id="O44408"/>
<dbReference type="PRO" id="PR:O44408"/>
<dbReference type="Proteomes" id="UP000001940">
    <property type="component" value="Chromosome IV"/>
</dbReference>
<dbReference type="Bgee" id="WBGene00002187">
    <property type="expression patterns" value="Expressed in pharyngeal muscle cell (C elegans) and 3 other cell types or tissues"/>
</dbReference>
<dbReference type="GO" id="GO:0005737">
    <property type="term" value="C:cytoplasm"/>
    <property type="evidence" value="ECO:0000314"/>
    <property type="project" value="WormBase"/>
</dbReference>
<dbReference type="GO" id="GO:0005634">
    <property type="term" value="C:nucleus"/>
    <property type="evidence" value="ECO:0000318"/>
    <property type="project" value="GO_Central"/>
</dbReference>
<dbReference type="GO" id="GO:0005524">
    <property type="term" value="F:ATP binding"/>
    <property type="evidence" value="ECO:0007669"/>
    <property type="project" value="UniProtKB-KW"/>
</dbReference>
<dbReference type="GO" id="GO:0017151">
    <property type="term" value="F:DEAD/H-box RNA helicase binding"/>
    <property type="evidence" value="ECO:0000353"/>
    <property type="project" value="WormBase"/>
</dbReference>
<dbReference type="GO" id="GO:0004705">
    <property type="term" value="F:JUN kinase activity"/>
    <property type="evidence" value="ECO:0000314"/>
    <property type="project" value="WormBase"/>
</dbReference>
<dbReference type="GO" id="GO:0004672">
    <property type="term" value="F:protein kinase activity"/>
    <property type="evidence" value="ECO:0000314"/>
    <property type="project" value="UniProtKB"/>
</dbReference>
<dbReference type="GO" id="GO:0106310">
    <property type="term" value="F:protein serine kinase activity"/>
    <property type="evidence" value="ECO:0007669"/>
    <property type="project" value="RHEA"/>
</dbReference>
<dbReference type="GO" id="GO:0004674">
    <property type="term" value="F:protein serine/threonine kinase activity"/>
    <property type="evidence" value="ECO:0000314"/>
    <property type="project" value="WormBase"/>
</dbReference>
<dbReference type="GO" id="GO:0061629">
    <property type="term" value="F:RNA polymerase II-specific DNA-binding transcription factor binding"/>
    <property type="evidence" value="ECO:0000353"/>
    <property type="project" value="WormBase"/>
</dbReference>
<dbReference type="GO" id="GO:1903843">
    <property type="term" value="P:cellular response to arsenite ion"/>
    <property type="evidence" value="ECO:0000315"/>
    <property type="project" value="UniProtKB"/>
</dbReference>
<dbReference type="GO" id="GO:0097237">
    <property type="term" value="P:cellular response to toxic substance"/>
    <property type="evidence" value="ECO:0000315"/>
    <property type="project" value="UniProtKB"/>
</dbReference>
<dbReference type="GO" id="GO:0050829">
    <property type="term" value="P:defense response to Gram-negative bacterium"/>
    <property type="evidence" value="ECO:0000315"/>
    <property type="project" value="UniProtKB"/>
</dbReference>
<dbReference type="GO" id="GO:0008340">
    <property type="term" value="P:determination of adult lifespan"/>
    <property type="evidence" value="ECO:0000315"/>
    <property type="project" value="UniProtKB"/>
</dbReference>
<dbReference type="GO" id="GO:0007254">
    <property type="term" value="P:JNK cascade"/>
    <property type="evidence" value="ECO:0000315"/>
    <property type="project" value="UniProtKB"/>
</dbReference>
<dbReference type="GO" id="GO:0007140">
    <property type="term" value="P:male meiotic nuclear division"/>
    <property type="evidence" value="ECO:0000315"/>
    <property type="project" value="WormBase"/>
</dbReference>
<dbReference type="GO" id="GO:1900425">
    <property type="term" value="P:negative regulation of defense response to bacterium"/>
    <property type="evidence" value="ECO:0000316"/>
    <property type="project" value="UniProtKB"/>
</dbReference>
<dbReference type="GO" id="GO:0010629">
    <property type="term" value="P:negative regulation of gene expression"/>
    <property type="evidence" value="ECO:0000315"/>
    <property type="project" value="UniProtKB"/>
</dbReference>
<dbReference type="GO" id="GO:1900181">
    <property type="term" value="P:negative regulation of protein localization to nucleus"/>
    <property type="evidence" value="ECO:0000315"/>
    <property type="project" value="UniProtKB"/>
</dbReference>
<dbReference type="GO" id="GO:0031333">
    <property type="term" value="P:negative regulation of protein-containing complex assembly"/>
    <property type="evidence" value="ECO:0000314"/>
    <property type="project" value="WormBase"/>
</dbReference>
<dbReference type="GO" id="GO:0048599">
    <property type="term" value="P:oocyte development"/>
    <property type="evidence" value="ECO:0000315"/>
    <property type="project" value="WormBase"/>
</dbReference>
<dbReference type="GO" id="GO:0010628">
    <property type="term" value="P:positive regulation of gene expression"/>
    <property type="evidence" value="ECO:0000315"/>
    <property type="project" value="UniProtKB"/>
</dbReference>
<dbReference type="GO" id="GO:0033120">
    <property type="term" value="P:positive regulation of RNA splicing"/>
    <property type="evidence" value="ECO:0000315"/>
    <property type="project" value="UniProtKB"/>
</dbReference>
<dbReference type="GO" id="GO:1900180">
    <property type="term" value="P:regulation of protein localization to nucleus"/>
    <property type="evidence" value="ECO:0000316"/>
    <property type="project" value="UniProtKB"/>
</dbReference>
<dbReference type="GO" id="GO:0022414">
    <property type="term" value="P:reproductive process"/>
    <property type="evidence" value="ECO:0000315"/>
    <property type="project" value="WormBase"/>
</dbReference>
<dbReference type="GO" id="GO:0046686">
    <property type="term" value="P:response to cadmium ion"/>
    <property type="evidence" value="ECO:0000315"/>
    <property type="project" value="UniProtKB"/>
</dbReference>
<dbReference type="GO" id="GO:0046688">
    <property type="term" value="P:response to copper ion"/>
    <property type="evidence" value="ECO:0000315"/>
    <property type="project" value="WormBase"/>
</dbReference>
<dbReference type="GO" id="GO:0034976">
    <property type="term" value="P:response to endoplasmic reticulum stress"/>
    <property type="evidence" value="ECO:0000315"/>
    <property type="project" value="WormBase"/>
</dbReference>
<dbReference type="GO" id="GO:0093002">
    <property type="term" value="P:response to nematicide"/>
    <property type="evidence" value="ECO:0000315"/>
    <property type="project" value="UniProtKB"/>
</dbReference>
<dbReference type="GO" id="GO:0042594">
    <property type="term" value="P:response to starvation"/>
    <property type="evidence" value="ECO:0000315"/>
    <property type="project" value="UniProtKB"/>
</dbReference>
<dbReference type="GO" id="GO:0006986">
    <property type="term" value="P:response to unfolded protein"/>
    <property type="evidence" value="ECO:0000316"/>
    <property type="project" value="UniProtKB"/>
</dbReference>
<dbReference type="GO" id="GO:0007283">
    <property type="term" value="P:spermatogenesis"/>
    <property type="evidence" value="ECO:0007669"/>
    <property type="project" value="UniProtKB-KW"/>
</dbReference>
<dbReference type="GO" id="GO:1990169">
    <property type="term" value="P:stress response to copper ion"/>
    <property type="evidence" value="ECO:0000315"/>
    <property type="project" value="WormBase"/>
</dbReference>
<dbReference type="FunFam" id="1.10.510.10:FF:001221">
    <property type="entry name" value="Mitogen-activated protein kinase"/>
    <property type="match status" value="1"/>
</dbReference>
<dbReference type="FunFam" id="3.30.200.20:FF:000028">
    <property type="entry name" value="Mitogen-activated protein kinase"/>
    <property type="match status" value="1"/>
</dbReference>
<dbReference type="Gene3D" id="3.30.200.20">
    <property type="entry name" value="Phosphorylase Kinase, domain 1"/>
    <property type="match status" value="1"/>
</dbReference>
<dbReference type="Gene3D" id="1.10.510.10">
    <property type="entry name" value="Transferase(Phosphotransferase) domain 1"/>
    <property type="match status" value="1"/>
</dbReference>
<dbReference type="InterPro" id="IPR011009">
    <property type="entry name" value="Kinase-like_dom_sf"/>
</dbReference>
<dbReference type="InterPro" id="IPR050117">
    <property type="entry name" value="MAP_kinase"/>
</dbReference>
<dbReference type="InterPro" id="IPR003527">
    <property type="entry name" value="MAP_kinase_CS"/>
</dbReference>
<dbReference type="InterPro" id="IPR008351">
    <property type="entry name" value="MAPK_JNK"/>
</dbReference>
<dbReference type="InterPro" id="IPR000719">
    <property type="entry name" value="Prot_kinase_dom"/>
</dbReference>
<dbReference type="InterPro" id="IPR008271">
    <property type="entry name" value="Ser/Thr_kinase_AS"/>
</dbReference>
<dbReference type="PANTHER" id="PTHR24055">
    <property type="entry name" value="MITOGEN-ACTIVATED PROTEIN KINASE"/>
    <property type="match status" value="1"/>
</dbReference>
<dbReference type="Pfam" id="PF00069">
    <property type="entry name" value="Pkinase"/>
    <property type="match status" value="1"/>
</dbReference>
<dbReference type="PRINTS" id="PR01772">
    <property type="entry name" value="JNKMAPKINASE"/>
</dbReference>
<dbReference type="SMART" id="SM00220">
    <property type="entry name" value="S_TKc"/>
    <property type="match status" value="1"/>
</dbReference>
<dbReference type="SUPFAM" id="SSF56112">
    <property type="entry name" value="Protein kinase-like (PK-like)"/>
    <property type="match status" value="1"/>
</dbReference>
<dbReference type="PROSITE" id="PS01351">
    <property type="entry name" value="MAPK"/>
    <property type="match status" value="1"/>
</dbReference>
<dbReference type="PROSITE" id="PS50011">
    <property type="entry name" value="PROTEIN_KINASE_DOM"/>
    <property type="match status" value="1"/>
</dbReference>
<dbReference type="PROSITE" id="PS00108">
    <property type="entry name" value="PROTEIN_KINASE_ST"/>
    <property type="match status" value="1"/>
</dbReference>
<sequence length="390" mass="45157">MEVDLPVHNEYDASRFHQVTIRDPIAGADSTFTIPTRYVNLSFLNAGAQGTVVMADDLVTTQRVAIKKMQQPFVMTMSAKRAYREFILLTTIKHPNIIRLLNAFTPDTSLSTFREVYLVMELMTHNLHEVIHRLRLDHKTLSFFVYQSLCAIKHLHNSGVIHRDLKPSNIVVNDRCVLKVLDFGLARKKNVDTSMRMSDYVVTRYYRAPEVILGLPYSEKVDIWSVGCIFAEMINHTVLFPGKDRIDQWTKIYSVLGTPDDHFISQLGQSAAMYVRSLPRHQARAFSEIVPDTNFLPETENPRVHLTPHVARDLLFNMLKINPEERYSVEDALNHPYVKLWFKDDEVNAPASENRYDQEIDFADKTLIEWKELIFNEVQRYQADHDIFTG</sequence>
<proteinExistence type="evidence at protein level"/>
<comment type="function">
    <text evidence="3 4 5 6 8 9 10 11 12 13">Mitogen-activated protein kinase which is an essential component of the JNK pathway composed of mlk-1, mek-1 and kgb-1 (PubMed:15116070, PubMed:22554143, PubMed:23352664). Phosphorylates the transcription factor fos-1 which prevents fos-1 dimerization and promoter binding and results in activation of target genes including F53A9.2/kreg-1 and lys-3/kreg-2 (PubMed:23437011). Phosphorylates jun-1 and activates the AP-1 transcription factor which is a heterodimer of jun-1 and fos-1 (PubMed:23352664). Phosphorylates glh-1 in vitro which may play a role in controlling glh-1 protein levels in the germline by targeting it for degradation by the proteasome (PubMed:17699606). Required for oogenesis and probably also for spermatogenesis (PubMed:12435362). Involved in the response to environmental stress such as heavy metals, infection and protein folding stress in an age-dependent manner (PubMed:15116070, PubMed:22554143). In larvae, has a protective role which becomes detrimental in adults (PubMed:22554143). May control susceptibility to infection, heavy metal stress and premature lethality by regulating daf-16 cellular localization (PubMed:22554143). Involved in the transcriptional response to bacterial pore-forming toxins and to fasting (PubMed:15256590, PubMed:21408619, PubMed:23352664). Required for fasting-induced longevity (PubMed:23352664). Involved in axon regeneration after injury downstream of tyrosine receptor svh-2 (PubMed:21670305, PubMed:22388962).</text>
</comment>
<comment type="catalytic activity">
    <reaction evidence="4">
        <text>L-seryl-[protein] + ATP = O-phospho-L-seryl-[protein] + ADP + H(+)</text>
        <dbReference type="Rhea" id="RHEA:17989"/>
        <dbReference type="Rhea" id="RHEA-COMP:9863"/>
        <dbReference type="Rhea" id="RHEA-COMP:11604"/>
        <dbReference type="ChEBI" id="CHEBI:15378"/>
        <dbReference type="ChEBI" id="CHEBI:29999"/>
        <dbReference type="ChEBI" id="CHEBI:30616"/>
        <dbReference type="ChEBI" id="CHEBI:83421"/>
        <dbReference type="ChEBI" id="CHEBI:456216"/>
        <dbReference type="EC" id="2.7.11.24"/>
    </reaction>
</comment>
<comment type="catalytic activity">
    <reaction evidence="4">
        <text>L-threonyl-[protein] + ATP = O-phospho-L-threonyl-[protein] + ADP + H(+)</text>
        <dbReference type="Rhea" id="RHEA:46608"/>
        <dbReference type="Rhea" id="RHEA-COMP:11060"/>
        <dbReference type="Rhea" id="RHEA-COMP:11605"/>
        <dbReference type="ChEBI" id="CHEBI:15378"/>
        <dbReference type="ChEBI" id="CHEBI:30013"/>
        <dbReference type="ChEBI" id="CHEBI:30616"/>
        <dbReference type="ChEBI" id="CHEBI:61977"/>
        <dbReference type="ChEBI" id="CHEBI:456216"/>
        <dbReference type="EC" id="2.7.11.24"/>
    </reaction>
</comment>
<comment type="cofactor">
    <cofactor evidence="1">
        <name>Mg(2+)</name>
        <dbReference type="ChEBI" id="CHEBI:18420"/>
    </cofactor>
</comment>
<comment type="activity regulation">
    <text evidence="4 11">Activated by mek-1 mediated phosphorylation. No differences in basal activation between larvae and adults (PubMed:22554143). Inhibited by phosphatase vhp-1 (PubMed:15116070).</text>
</comment>
<comment type="subunit">
    <text evidence="3 6 13">Interacts with glh-1, glh-2 (via C-terminus), glh-3 (via C-terminus) and glh-4 (via C-terminus) (PubMed:12435362, PubMed:17699606). Interacts with csn-5; the interaction may prevent glh-1 degradation induced by kgb-1 (PubMed:17699606). Interacts with fos-1 (PubMed:23437011).</text>
</comment>
<comment type="interaction">
    <interactant intactId="EBI-319489">
        <id>O44408</id>
    </interactant>
    <interactant intactId="EBI-1571876">
        <id>Q966L9</id>
        <label>glh-2</label>
    </interactant>
    <organismsDiffer>false</organismsDiffer>
    <experiments>2</experiments>
</comment>
<comment type="interaction">
    <interactant intactId="EBI-319489">
        <id>O44408</id>
    </interactant>
    <interactant intactId="EBI-1571750">
        <id>O01836</id>
        <label>glh-3</label>
    </interactant>
    <organismsDiffer>false</organismsDiffer>
    <experiments>2</experiments>
</comment>
<comment type="subcellular location">
    <subcellularLocation>
        <location evidence="6">Cytoplasm</location>
    </subcellularLocation>
    <text evidence="6">Uniformly cytoplasmic in distal germline but resolves into discrete particles in developing oocytes.</text>
</comment>
<comment type="tissue specificity">
    <text evidence="3">Expressed in somatic and germline tissues.</text>
</comment>
<comment type="induction">
    <text evidence="5">By B.thuringiensis pore-forming toxin Cry5B.</text>
</comment>
<comment type="PTM">
    <text evidence="12 16">May be phosphorylated by mek-1 on Ser-198 and/or Tyr-200 (PubMed:15116070). Phosphorylation is induced upon Cu(2+) and arsenite-mediated cell stimulation and by fasting (PubMed:15116070, PubMed:23352664).</text>
</comment>
<comment type="disruption phenotype">
    <text evidence="3 4 5 6 8 9 11 12 13">Temperature-sensitive sterility in both hermaphrodites and males which, in hermaphrodites, is associated with disorganized gonads and with impaired production of endomitotic oocytes, likely due to a defect in oocyte maturation which often results in vulva protrusion (PubMed:12435362). Both hermaphrodites and males produce sperm but it is defective (PubMed:12435362). In addition, the formation of P granules is disrupted in later stage of oogenesis and the protein levels of glh-1, a component of the P granules, are increased (PubMed:12435362, PubMed:17699606). Old adults are bloated and move more slowly (PubMed:17699606). Hypersensitivity and impaired up-regulation of several genes in response to heavy metals (Cu(2+) and Cd(2+)) and to bacterial pore-forming toxins exposure (PubMed:15116070, PubMed:15256590, PubMed:21408619, PubMed:23437011). RNAi knockdown at different developmental stages shows age-dependent defects: larvae are hypersensitive to cadmium and protein folding stress and have a reduced survival capacity but these effects are not observed in adults (PubMed:22554143). Impaired fasting-induced longevity (PubMed:23352664). RNAi knockdown in adults results in increased daf-16 nuclear localization in intestinal cells but not in response to fasting (PubMed:22554143, PubMed:23352664). Mutants have impaired axon regeneration (PubMed:21670305).</text>
</comment>
<comment type="similarity">
    <text evidence="15">Belongs to the protein kinase superfamily. CMGC Ser/Thr protein kinase family. MAP kinase subfamily.</text>
</comment>
<accession>O44408</accession>
<organism evidence="17">
    <name type="scientific">Caenorhabditis elegans</name>
    <dbReference type="NCBI Taxonomy" id="6239"/>
    <lineage>
        <taxon>Eukaryota</taxon>
        <taxon>Metazoa</taxon>
        <taxon>Ecdysozoa</taxon>
        <taxon>Nematoda</taxon>
        <taxon>Chromadorea</taxon>
        <taxon>Rhabditida</taxon>
        <taxon>Rhabditina</taxon>
        <taxon>Rhabditomorpha</taxon>
        <taxon>Rhabditoidea</taxon>
        <taxon>Rhabditidae</taxon>
        <taxon>Peloderinae</taxon>
        <taxon>Caenorhabditis</taxon>
    </lineage>
</organism>